<reference key="1">
    <citation type="journal article" date="2005" name="Proc. Natl. Acad. Sci. U.S.A.">
        <title>Comparison of the complete genome sequences of Pseudomonas syringae pv. syringae B728a and pv. tomato DC3000.</title>
        <authorList>
            <person name="Feil H."/>
            <person name="Feil W.S."/>
            <person name="Chain P."/>
            <person name="Larimer F."/>
            <person name="Dibartolo G."/>
            <person name="Copeland A."/>
            <person name="Lykidis A."/>
            <person name="Trong S."/>
            <person name="Nolan M."/>
            <person name="Goltsman E."/>
            <person name="Thiel J."/>
            <person name="Malfatti S."/>
            <person name="Loper J.E."/>
            <person name="Lapidus A."/>
            <person name="Detter J.C."/>
            <person name="Land M."/>
            <person name="Richardson P.M."/>
            <person name="Kyrpides N.C."/>
            <person name="Ivanova N."/>
            <person name="Lindow S.E."/>
        </authorList>
    </citation>
    <scope>NUCLEOTIDE SEQUENCE [LARGE SCALE GENOMIC DNA]</scope>
    <source>
        <strain>B728a</strain>
    </source>
</reference>
<comment type="function">
    <text evidence="1">Cleaves peptides in various proteins in a process that requires ATP hydrolysis. Has a chymotrypsin-like activity. Plays a major role in the degradation of misfolded proteins.</text>
</comment>
<comment type="catalytic activity">
    <reaction evidence="1">
        <text>Hydrolysis of proteins to small peptides in the presence of ATP and magnesium. alpha-casein is the usual test substrate. In the absence of ATP, only oligopeptides shorter than five residues are hydrolyzed (such as succinyl-Leu-Tyr-|-NHMec, and Leu-Tyr-Leu-|-Tyr-Trp, in which cleavage of the -Tyr-|-Leu- and -Tyr-|-Trp bonds also occurs).</text>
        <dbReference type="EC" id="3.4.21.92"/>
    </reaction>
</comment>
<comment type="subunit">
    <text evidence="1">Fourteen ClpP subunits assemble into 2 heptameric rings which stack back to back to give a disk-like structure with a central cavity, resembling the structure of eukaryotic proteasomes.</text>
</comment>
<comment type="subcellular location">
    <subcellularLocation>
        <location evidence="1">Cytoplasm</location>
    </subcellularLocation>
</comment>
<comment type="similarity">
    <text evidence="1">Belongs to the peptidase S14 family.</text>
</comment>
<keyword id="KW-0963">Cytoplasm</keyword>
<keyword id="KW-0378">Hydrolase</keyword>
<keyword id="KW-0645">Protease</keyword>
<keyword id="KW-0720">Serine protease</keyword>
<evidence type="ECO:0000255" key="1">
    <source>
        <dbReference type="HAMAP-Rule" id="MF_00444"/>
    </source>
</evidence>
<feature type="chain" id="PRO_0000226462" description="ATP-dependent Clp protease proteolytic subunit">
    <location>
        <begin position="1"/>
        <end position="213"/>
    </location>
</feature>
<feature type="active site" description="Nucleophile" evidence="1">
    <location>
        <position position="114"/>
    </location>
</feature>
<feature type="active site" evidence="1">
    <location>
        <position position="139"/>
    </location>
</feature>
<sequence length="213" mass="23578">MSRNSYIQQNSDIQAAGGLVPMVIEQSARGERAYDIYSRLLKERVIFMVGPVEDYMANLIAAQLLFLEAENPDKDIHLYINSPGGSVTAGMSIYDTMQFIKPDVSTICIGQACSMGAFLLAGGAEGKRHCLPNSRMMIHQPLGGFQGQASDIDIHAKEILHIRHRLNSLLAHHTGQSLETIERDTERDNFMSAERAAEYGLIDSVINKRQMPA</sequence>
<protein>
    <recommendedName>
        <fullName evidence="1">ATP-dependent Clp protease proteolytic subunit</fullName>
        <ecNumber evidence="1">3.4.21.92</ecNumber>
    </recommendedName>
    <alternativeName>
        <fullName evidence="1">Endopeptidase Clp</fullName>
    </alternativeName>
</protein>
<name>CLPP_PSEU2</name>
<dbReference type="EC" id="3.4.21.92" evidence="1"/>
<dbReference type="EMBL" id="CP000075">
    <property type="protein sequence ID" value="AAY36795.1"/>
    <property type="molecule type" value="Genomic_DNA"/>
</dbReference>
<dbReference type="RefSeq" id="WP_002552734.1">
    <property type="nucleotide sequence ID" value="NC_007005.1"/>
</dbReference>
<dbReference type="RefSeq" id="YP_234833.1">
    <property type="nucleotide sequence ID" value="NC_007005.1"/>
</dbReference>
<dbReference type="SMR" id="Q4ZVM7"/>
<dbReference type="STRING" id="205918.Psyr_1747"/>
<dbReference type="MEROPS" id="S14.001"/>
<dbReference type="GeneID" id="96218173"/>
<dbReference type="KEGG" id="psb:Psyr_1747"/>
<dbReference type="PATRIC" id="fig|205918.7.peg.1785"/>
<dbReference type="eggNOG" id="COG0740">
    <property type="taxonomic scope" value="Bacteria"/>
</dbReference>
<dbReference type="HOGENOM" id="CLU_058707_3_2_6"/>
<dbReference type="OrthoDB" id="9802800at2"/>
<dbReference type="Proteomes" id="UP000000426">
    <property type="component" value="Chromosome"/>
</dbReference>
<dbReference type="GO" id="GO:0005737">
    <property type="term" value="C:cytoplasm"/>
    <property type="evidence" value="ECO:0007669"/>
    <property type="project" value="UniProtKB-SubCell"/>
</dbReference>
<dbReference type="GO" id="GO:0009368">
    <property type="term" value="C:endopeptidase Clp complex"/>
    <property type="evidence" value="ECO:0007669"/>
    <property type="project" value="TreeGrafter"/>
</dbReference>
<dbReference type="GO" id="GO:0004176">
    <property type="term" value="F:ATP-dependent peptidase activity"/>
    <property type="evidence" value="ECO:0007669"/>
    <property type="project" value="InterPro"/>
</dbReference>
<dbReference type="GO" id="GO:0051117">
    <property type="term" value="F:ATPase binding"/>
    <property type="evidence" value="ECO:0007669"/>
    <property type="project" value="TreeGrafter"/>
</dbReference>
<dbReference type="GO" id="GO:0004252">
    <property type="term" value="F:serine-type endopeptidase activity"/>
    <property type="evidence" value="ECO:0007669"/>
    <property type="project" value="UniProtKB-UniRule"/>
</dbReference>
<dbReference type="GO" id="GO:0006515">
    <property type="term" value="P:protein quality control for misfolded or incompletely synthesized proteins"/>
    <property type="evidence" value="ECO:0007669"/>
    <property type="project" value="TreeGrafter"/>
</dbReference>
<dbReference type="CDD" id="cd07017">
    <property type="entry name" value="S14_ClpP_2"/>
    <property type="match status" value="1"/>
</dbReference>
<dbReference type="FunFam" id="3.90.226.10:FF:000001">
    <property type="entry name" value="ATP-dependent Clp protease proteolytic subunit"/>
    <property type="match status" value="1"/>
</dbReference>
<dbReference type="Gene3D" id="3.90.226.10">
    <property type="entry name" value="2-enoyl-CoA Hydratase, Chain A, domain 1"/>
    <property type="match status" value="1"/>
</dbReference>
<dbReference type="HAMAP" id="MF_00444">
    <property type="entry name" value="ClpP"/>
    <property type="match status" value="1"/>
</dbReference>
<dbReference type="InterPro" id="IPR001907">
    <property type="entry name" value="ClpP"/>
</dbReference>
<dbReference type="InterPro" id="IPR029045">
    <property type="entry name" value="ClpP/crotonase-like_dom_sf"/>
</dbReference>
<dbReference type="InterPro" id="IPR023562">
    <property type="entry name" value="ClpP/TepA"/>
</dbReference>
<dbReference type="InterPro" id="IPR033135">
    <property type="entry name" value="ClpP_His_AS"/>
</dbReference>
<dbReference type="InterPro" id="IPR018215">
    <property type="entry name" value="ClpP_Ser_AS"/>
</dbReference>
<dbReference type="NCBIfam" id="TIGR00493">
    <property type="entry name" value="clpP"/>
    <property type="match status" value="1"/>
</dbReference>
<dbReference type="NCBIfam" id="NF001368">
    <property type="entry name" value="PRK00277.1"/>
    <property type="match status" value="1"/>
</dbReference>
<dbReference type="NCBIfam" id="NF009205">
    <property type="entry name" value="PRK12553.1"/>
    <property type="match status" value="1"/>
</dbReference>
<dbReference type="PANTHER" id="PTHR10381">
    <property type="entry name" value="ATP-DEPENDENT CLP PROTEASE PROTEOLYTIC SUBUNIT"/>
    <property type="match status" value="1"/>
</dbReference>
<dbReference type="PANTHER" id="PTHR10381:SF70">
    <property type="entry name" value="ATP-DEPENDENT CLP PROTEASE PROTEOLYTIC SUBUNIT"/>
    <property type="match status" value="1"/>
</dbReference>
<dbReference type="Pfam" id="PF00574">
    <property type="entry name" value="CLP_protease"/>
    <property type="match status" value="1"/>
</dbReference>
<dbReference type="PRINTS" id="PR00127">
    <property type="entry name" value="CLPPROTEASEP"/>
</dbReference>
<dbReference type="SUPFAM" id="SSF52096">
    <property type="entry name" value="ClpP/crotonase"/>
    <property type="match status" value="1"/>
</dbReference>
<dbReference type="PROSITE" id="PS00382">
    <property type="entry name" value="CLP_PROTEASE_HIS"/>
    <property type="match status" value="1"/>
</dbReference>
<dbReference type="PROSITE" id="PS00381">
    <property type="entry name" value="CLP_PROTEASE_SER"/>
    <property type="match status" value="1"/>
</dbReference>
<proteinExistence type="inferred from homology"/>
<organism>
    <name type="scientific">Pseudomonas syringae pv. syringae (strain B728a)</name>
    <dbReference type="NCBI Taxonomy" id="205918"/>
    <lineage>
        <taxon>Bacteria</taxon>
        <taxon>Pseudomonadati</taxon>
        <taxon>Pseudomonadota</taxon>
        <taxon>Gammaproteobacteria</taxon>
        <taxon>Pseudomonadales</taxon>
        <taxon>Pseudomonadaceae</taxon>
        <taxon>Pseudomonas</taxon>
        <taxon>Pseudomonas syringae</taxon>
    </lineage>
</organism>
<gene>
    <name evidence="1" type="primary">clpP</name>
    <name type="ordered locus">Psyr_1747</name>
</gene>
<accession>Q4ZVM7</accession>